<sequence length="704" mass="77523">MNEKKVYSYEWAGRPLVIEVGQLAKQANGAVLVRYGDTSVLSTATMSKSPKPLDFFPLTVNYEERLYAAGKIPGGFIKREGRPSEKAILASRLIDRPIRPMFPDGFRNEVQVISMVMSNDSDCTSEMAAMVGSSLALAISDIPFDGPIAGVQVGYIDGEFIVNPTVEQSNQSTIHLSVAGNKDAINMVEAGALEVPEEVMLEAIMFGHEEIKKIIAFQEQIVAEVGKEKKPVTLFEIDEAIQADIKAACETDMHDAIQTAEKHARDEAIQAVKDRIIASYEEQEADDDTMKQVYTILDKMVKDEVRRQITEDKIRPDGRKLDEIRPLSSETGLLQRTHGSGLFTRGQTQALSICTLGALGDVQIIDGLGVEESKRFMHHYNFPQFSVGETGPIRGPGRREIGHGALGERALEAVIPDESVFPYTIRCVSEVLESNGSTSQASICASTLAMMDAGVPLKAPVAGIAMGLIKKGEHYSILTDIQGMEDHLGDMDFKVAGTAKGVTALQMDIKIDGLSRNILEEALTQAKVGRMHILESMLATLAEPRKQLSEFAPKIVIVKINPDKIRDVIGPGGKQINKIIEETGVKIDTEQDGTIYISSANEEMNARAKQIIEDIVREAKVGEYYLSTVKRIEKFGAFCEIFPGKDGLLHISEIQEERTKQVEDVLKLGDQLLVKVIEIDKQGRVNLSRKVVLQEEKERAEQQK</sequence>
<name>PNP_LYSSC</name>
<reference key="1">
    <citation type="journal article" date="2008" name="J. Bacteriol.">
        <title>Complete genome sequence of the mosquitocidal bacterium Bacillus sphaericus C3-41 and comparison with those of closely related Bacillus species.</title>
        <authorList>
            <person name="Hu X."/>
            <person name="Fan W."/>
            <person name="Han B."/>
            <person name="Liu H."/>
            <person name="Zheng D."/>
            <person name="Li Q."/>
            <person name="Dong W."/>
            <person name="Yan J."/>
            <person name="Gao M."/>
            <person name="Berry C."/>
            <person name="Yuan Z."/>
        </authorList>
    </citation>
    <scope>NUCLEOTIDE SEQUENCE [LARGE SCALE GENOMIC DNA]</scope>
    <source>
        <strain>C3-41</strain>
    </source>
</reference>
<dbReference type="EC" id="2.7.7.8" evidence="1"/>
<dbReference type="EMBL" id="CP000817">
    <property type="protein sequence ID" value="ACA39204.1"/>
    <property type="molecule type" value="Genomic_DNA"/>
</dbReference>
<dbReference type="RefSeq" id="WP_012293310.1">
    <property type="nucleotide sequence ID" value="NC_010382.1"/>
</dbReference>
<dbReference type="SMR" id="B1HR13"/>
<dbReference type="EnsemblBacteria" id="ACA39204">
    <property type="protein sequence ID" value="ACA39204"/>
    <property type="gene ID" value="Bsph_1606"/>
</dbReference>
<dbReference type="KEGG" id="lsp:Bsph_1606"/>
<dbReference type="HOGENOM" id="CLU_004217_2_2_9"/>
<dbReference type="Proteomes" id="UP000002164">
    <property type="component" value="Chromosome"/>
</dbReference>
<dbReference type="GO" id="GO:0005829">
    <property type="term" value="C:cytosol"/>
    <property type="evidence" value="ECO:0007669"/>
    <property type="project" value="TreeGrafter"/>
</dbReference>
<dbReference type="GO" id="GO:0000175">
    <property type="term" value="F:3'-5'-RNA exonuclease activity"/>
    <property type="evidence" value="ECO:0007669"/>
    <property type="project" value="TreeGrafter"/>
</dbReference>
<dbReference type="GO" id="GO:0000287">
    <property type="term" value="F:magnesium ion binding"/>
    <property type="evidence" value="ECO:0007669"/>
    <property type="project" value="UniProtKB-UniRule"/>
</dbReference>
<dbReference type="GO" id="GO:0004654">
    <property type="term" value="F:polyribonucleotide nucleotidyltransferase activity"/>
    <property type="evidence" value="ECO:0007669"/>
    <property type="project" value="UniProtKB-UniRule"/>
</dbReference>
<dbReference type="GO" id="GO:0003723">
    <property type="term" value="F:RNA binding"/>
    <property type="evidence" value="ECO:0007669"/>
    <property type="project" value="UniProtKB-UniRule"/>
</dbReference>
<dbReference type="GO" id="GO:0006402">
    <property type="term" value="P:mRNA catabolic process"/>
    <property type="evidence" value="ECO:0007669"/>
    <property type="project" value="UniProtKB-UniRule"/>
</dbReference>
<dbReference type="GO" id="GO:0006396">
    <property type="term" value="P:RNA processing"/>
    <property type="evidence" value="ECO:0007669"/>
    <property type="project" value="InterPro"/>
</dbReference>
<dbReference type="CDD" id="cd02393">
    <property type="entry name" value="KH-I_PNPase"/>
    <property type="match status" value="1"/>
</dbReference>
<dbReference type="CDD" id="cd11363">
    <property type="entry name" value="RNase_PH_PNPase_1"/>
    <property type="match status" value="1"/>
</dbReference>
<dbReference type="CDD" id="cd11364">
    <property type="entry name" value="RNase_PH_PNPase_2"/>
    <property type="match status" value="1"/>
</dbReference>
<dbReference type="CDD" id="cd04472">
    <property type="entry name" value="S1_PNPase"/>
    <property type="match status" value="1"/>
</dbReference>
<dbReference type="FunFam" id="2.40.50.140:FF:000023">
    <property type="entry name" value="Polyribonucleotide nucleotidyltransferase"/>
    <property type="match status" value="1"/>
</dbReference>
<dbReference type="FunFam" id="3.30.1370.10:FF:000001">
    <property type="entry name" value="Polyribonucleotide nucleotidyltransferase"/>
    <property type="match status" value="1"/>
</dbReference>
<dbReference type="FunFam" id="3.30.230.70:FF:000001">
    <property type="entry name" value="Polyribonucleotide nucleotidyltransferase"/>
    <property type="match status" value="1"/>
</dbReference>
<dbReference type="FunFam" id="3.30.230.70:FF:000002">
    <property type="entry name" value="Polyribonucleotide nucleotidyltransferase"/>
    <property type="match status" value="1"/>
</dbReference>
<dbReference type="Gene3D" id="3.30.230.70">
    <property type="entry name" value="GHMP Kinase, N-terminal domain"/>
    <property type="match status" value="2"/>
</dbReference>
<dbReference type="Gene3D" id="3.30.1370.10">
    <property type="entry name" value="K Homology domain, type 1"/>
    <property type="match status" value="1"/>
</dbReference>
<dbReference type="Gene3D" id="2.40.50.140">
    <property type="entry name" value="Nucleic acid-binding proteins"/>
    <property type="match status" value="1"/>
</dbReference>
<dbReference type="HAMAP" id="MF_01595">
    <property type="entry name" value="PNPase"/>
    <property type="match status" value="1"/>
</dbReference>
<dbReference type="InterPro" id="IPR001247">
    <property type="entry name" value="ExoRNase_PH_dom1"/>
</dbReference>
<dbReference type="InterPro" id="IPR015847">
    <property type="entry name" value="ExoRNase_PH_dom2"/>
</dbReference>
<dbReference type="InterPro" id="IPR036345">
    <property type="entry name" value="ExoRNase_PH_dom2_sf"/>
</dbReference>
<dbReference type="InterPro" id="IPR004087">
    <property type="entry name" value="KH_dom"/>
</dbReference>
<dbReference type="InterPro" id="IPR004088">
    <property type="entry name" value="KH_dom_type_1"/>
</dbReference>
<dbReference type="InterPro" id="IPR036612">
    <property type="entry name" value="KH_dom_type_1_sf"/>
</dbReference>
<dbReference type="InterPro" id="IPR012340">
    <property type="entry name" value="NA-bd_OB-fold"/>
</dbReference>
<dbReference type="InterPro" id="IPR012162">
    <property type="entry name" value="PNPase"/>
</dbReference>
<dbReference type="InterPro" id="IPR027408">
    <property type="entry name" value="PNPase/RNase_PH_dom_sf"/>
</dbReference>
<dbReference type="InterPro" id="IPR015848">
    <property type="entry name" value="PNPase_PH_RNA-bd_bac/org-type"/>
</dbReference>
<dbReference type="InterPro" id="IPR020568">
    <property type="entry name" value="Ribosomal_Su5_D2-typ_SF"/>
</dbReference>
<dbReference type="InterPro" id="IPR003029">
    <property type="entry name" value="S1_domain"/>
</dbReference>
<dbReference type="NCBIfam" id="TIGR03591">
    <property type="entry name" value="polynuc_phos"/>
    <property type="match status" value="1"/>
</dbReference>
<dbReference type="NCBIfam" id="NF008805">
    <property type="entry name" value="PRK11824.1"/>
    <property type="match status" value="1"/>
</dbReference>
<dbReference type="PANTHER" id="PTHR11252">
    <property type="entry name" value="POLYRIBONUCLEOTIDE NUCLEOTIDYLTRANSFERASE"/>
    <property type="match status" value="1"/>
</dbReference>
<dbReference type="PANTHER" id="PTHR11252:SF0">
    <property type="entry name" value="POLYRIBONUCLEOTIDE NUCLEOTIDYLTRANSFERASE 1, MITOCHONDRIAL"/>
    <property type="match status" value="1"/>
</dbReference>
<dbReference type="Pfam" id="PF00013">
    <property type="entry name" value="KH_1"/>
    <property type="match status" value="1"/>
</dbReference>
<dbReference type="Pfam" id="PF03726">
    <property type="entry name" value="PNPase"/>
    <property type="match status" value="1"/>
</dbReference>
<dbReference type="Pfam" id="PF01138">
    <property type="entry name" value="RNase_PH"/>
    <property type="match status" value="2"/>
</dbReference>
<dbReference type="Pfam" id="PF03725">
    <property type="entry name" value="RNase_PH_C"/>
    <property type="match status" value="2"/>
</dbReference>
<dbReference type="Pfam" id="PF00575">
    <property type="entry name" value="S1"/>
    <property type="match status" value="1"/>
</dbReference>
<dbReference type="PIRSF" id="PIRSF005499">
    <property type="entry name" value="PNPase"/>
    <property type="match status" value="1"/>
</dbReference>
<dbReference type="SMART" id="SM00322">
    <property type="entry name" value="KH"/>
    <property type="match status" value="1"/>
</dbReference>
<dbReference type="SMART" id="SM00316">
    <property type="entry name" value="S1"/>
    <property type="match status" value="1"/>
</dbReference>
<dbReference type="SUPFAM" id="SSF54791">
    <property type="entry name" value="Eukaryotic type KH-domain (KH-domain type I)"/>
    <property type="match status" value="1"/>
</dbReference>
<dbReference type="SUPFAM" id="SSF50249">
    <property type="entry name" value="Nucleic acid-binding proteins"/>
    <property type="match status" value="1"/>
</dbReference>
<dbReference type="SUPFAM" id="SSF55666">
    <property type="entry name" value="Ribonuclease PH domain 2-like"/>
    <property type="match status" value="2"/>
</dbReference>
<dbReference type="SUPFAM" id="SSF54211">
    <property type="entry name" value="Ribosomal protein S5 domain 2-like"/>
    <property type="match status" value="2"/>
</dbReference>
<dbReference type="PROSITE" id="PS50084">
    <property type="entry name" value="KH_TYPE_1"/>
    <property type="match status" value="1"/>
</dbReference>
<dbReference type="PROSITE" id="PS50126">
    <property type="entry name" value="S1"/>
    <property type="match status" value="1"/>
</dbReference>
<evidence type="ECO:0000255" key="1">
    <source>
        <dbReference type="HAMAP-Rule" id="MF_01595"/>
    </source>
</evidence>
<feature type="chain" id="PRO_1000147929" description="Polyribonucleotide nucleotidyltransferase">
    <location>
        <begin position="1"/>
        <end position="704"/>
    </location>
</feature>
<feature type="domain" description="KH" evidence="1">
    <location>
        <begin position="553"/>
        <end position="612"/>
    </location>
</feature>
<feature type="domain" description="S1 motif" evidence="1">
    <location>
        <begin position="622"/>
        <end position="690"/>
    </location>
</feature>
<feature type="binding site" evidence="1">
    <location>
        <position position="486"/>
    </location>
    <ligand>
        <name>Mg(2+)</name>
        <dbReference type="ChEBI" id="CHEBI:18420"/>
    </ligand>
</feature>
<feature type="binding site" evidence="1">
    <location>
        <position position="492"/>
    </location>
    <ligand>
        <name>Mg(2+)</name>
        <dbReference type="ChEBI" id="CHEBI:18420"/>
    </ligand>
</feature>
<accession>B1HR13</accession>
<gene>
    <name evidence="1" type="primary">pnp</name>
    <name type="ordered locus">Bsph_1606</name>
</gene>
<comment type="function">
    <text evidence="1">Involved in mRNA degradation. Catalyzes the phosphorolysis of single-stranded polyribonucleotides processively in the 3'- to 5'-direction.</text>
</comment>
<comment type="catalytic activity">
    <reaction evidence="1">
        <text>RNA(n+1) + phosphate = RNA(n) + a ribonucleoside 5'-diphosphate</text>
        <dbReference type="Rhea" id="RHEA:22096"/>
        <dbReference type="Rhea" id="RHEA-COMP:14527"/>
        <dbReference type="Rhea" id="RHEA-COMP:17342"/>
        <dbReference type="ChEBI" id="CHEBI:43474"/>
        <dbReference type="ChEBI" id="CHEBI:57930"/>
        <dbReference type="ChEBI" id="CHEBI:140395"/>
        <dbReference type="EC" id="2.7.7.8"/>
    </reaction>
</comment>
<comment type="cofactor">
    <cofactor evidence="1">
        <name>Mg(2+)</name>
        <dbReference type="ChEBI" id="CHEBI:18420"/>
    </cofactor>
</comment>
<comment type="subcellular location">
    <subcellularLocation>
        <location evidence="1">Cytoplasm</location>
    </subcellularLocation>
</comment>
<comment type="similarity">
    <text evidence="1">Belongs to the polyribonucleotide nucleotidyltransferase family.</text>
</comment>
<organism>
    <name type="scientific">Lysinibacillus sphaericus (strain C3-41)</name>
    <dbReference type="NCBI Taxonomy" id="444177"/>
    <lineage>
        <taxon>Bacteria</taxon>
        <taxon>Bacillati</taxon>
        <taxon>Bacillota</taxon>
        <taxon>Bacilli</taxon>
        <taxon>Bacillales</taxon>
        <taxon>Bacillaceae</taxon>
        <taxon>Lysinibacillus</taxon>
    </lineage>
</organism>
<keyword id="KW-0963">Cytoplasm</keyword>
<keyword id="KW-0460">Magnesium</keyword>
<keyword id="KW-0479">Metal-binding</keyword>
<keyword id="KW-0548">Nucleotidyltransferase</keyword>
<keyword id="KW-0694">RNA-binding</keyword>
<keyword id="KW-0808">Transferase</keyword>
<proteinExistence type="inferred from homology"/>
<protein>
    <recommendedName>
        <fullName evidence="1">Polyribonucleotide nucleotidyltransferase</fullName>
        <ecNumber evidence="1">2.7.7.8</ecNumber>
    </recommendedName>
    <alternativeName>
        <fullName evidence="1">Polynucleotide phosphorylase</fullName>
        <shortName evidence="1">PNPase</shortName>
    </alternativeName>
</protein>